<gene>
    <name evidence="8" type="primary">ABCG36</name>
    <name evidence="5" type="synonym">PDR3</name>
    <name evidence="6 7" type="synonym">PDR9</name>
    <name evidence="12" type="ordered locus">Os01g0609300</name>
    <name type="ordered locus">LOC_Os01g42380</name>
    <name evidence="10 11" type="ORF">P0410E03.7</name>
</gene>
<reference key="1">
    <citation type="journal article" date="2003" name="Plant Physiol.">
        <title>The ATP-binding cassette transporters: structure, function, and gene family comparison between rice and Arabidopsis.</title>
        <authorList>
            <person name="Jasinski M."/>
            <person name="Ducos E."/>
            <person name="Martinoia E."/>
            <person name="Boutry M."/>
        </authorList>
    </citation>
    <scope>NUCLEOTIDE SEQUENCE [GENOMIC DNA]</scope>
    <source>
        <strain>cv. Nipponbare</strain>
    </source>
</reference>
<reference key="2">
    <citation type="journal article" date="2002" name="Nature">
        <title>The genome sequence and structure of rice chromosome 1.</title>
        <authorList>
            <person name="Sasaki T."/>
            <person name="Matsumoto T."/>
            <person name="Yamamoto K."/>
            <person name="Sakata K."/>
            <person name="Baba T."/>
            <person name="Katayose Y."/>
            <person name="Wu J."/>
            <person name="Niimura Y."/>
            <person name="Cheng Z."/>
            <person name="Nagamura Y."/>
            <person name="Antonio B.A."/>
            <person name="Kanamori H."/>
            <person name="Hosokawa S."/>
            <person name="Masukawa M."/>
            <person name="Arikawa K."/>
            <person name="Chiden Y."/>
            <person name="Hayashi M."/>
            <person name="Okamoto M."/>
            <person name="Ando T."/>
            <person name="Aoki H."/>
            <person name="Arita K."/>
            <person name="Hamada M."/>
            <person name="Harada C."/>
            <person name="Hijishita S."/>
            <person name="Honda M."/>
            <person name="Ichikawa Y."/>
            <person name="Idonuma A."/>
            <person name="Iijima M."/>
            <person name="Ikeda M."/>
            <person name="Ikeno M."/>
            <person name="Ito S."/>
            <person name="Ito T."/>
            <person name="Ito Y."/>
            <person name="Ito Y."/>
            <person name="Iwabuchi A."/>
            <person name="Kamiya K."/>
            <person name="Karasawa W."/>
            <person name="Katagiri S."/>
            <person name="Kikuta A."/>
            <person name="Kobayashi N."/>
            <person name="Kono I."/>
            <person name="Machita K."/>
            <person name="Maehara T."/>
            <person name="Mizuno H."/>
            <person name="Mizubayashi T."/>
            <person name="Mukai Y."/>
            <person name="Nagasaki H."/>
            <person name="Nakashima M."/>
            <person name="Nakama Y."/>
            <person name="Nakamichi Y."/>
            <person name="Nakamura M."/>
            <person name="Namiki N."/>
            <person name="Negishi M."/>
            <person name="Ohta I."/>
            <person name="Ono N."/>
            <person name="Saji S."/>
            <person name="Sakai K."/>
            <person name="Shibata M."/>
            <person name="Shimokawa T."/>
            <person name="Shomura A."/>
            <person name="Song J."/>
            <person name="Takazaki Y."/>
            <person name="Terasawa K."/>
            <person name="Tsuji K."/>
            <person name="Waki K."/>
            <person name="Yamagata H."/>
            <person name="Yamane H."/>
            <person name="Yoshiki S."/>
            <person name="Yoshihara R."/>
            <person name="Yukawa K."/>
            <person name="Zhong H."/>
            <person name="Iwama H."/>
            <person name="Endo T."/>
            <person name="Ito H."/>
            <person name="Hahn J.H."/>
            <person name="Kim H.-I."/>
            <person name="Eun M.-Y."/>
            <person name="Yano M."/>
            <person name="Jiang J."/>
            <person name="Gojobori T."/>
        </authorList>
    </citation>
    <scope>NUCLEOTIDE SEQUENCE [LARGE SCALE GENOMIC DNA]</scope>
    <source>
        <strain>cv. Nipponbare</strain>
    </source>
</reference>
<reference key="3">
    <citation type="journal article" date="2005" name="Nature">
        <title>The map-based sequence of the rice genome.</title>
        <authorList>
            <consortium name="International rice genome sequencing project (IRGSP)"/>
        </authorList>
    </citation>
    <scope>NUCLEOTIDE SEQUENCE [LARGE SCALE GENOMIC DNA]</scope>
    <source>
        <strain>cv. Nipponbare</strain>
    </source>
</reference>
<reference key="4">
    <citation type="journal article" date="2008" name="Nucleic Acids Res.">
        <title>The rice annotation project database (RAP-DB): 2008 update.</title>
        <authorList>
            <consortium name="The rice annotation project (RAP)"/>
        </authorList>
    </citation>
    <scope>GENOME REANNOTATION</scope>
    <source>
        <strain>cv. Nipponbare</strain>
    </source>
</reference>
<reference key="5">
    <citation type="journal article" date="2013" name="Rice">
        <title>Improvement of the Oryza sativa Nipponbare reference genome using next generation sequence and optical map data.</title>
        <authorList>
            <person name="Kawahara Y."/>
            <person name="de la Bastide M."/>
            <person name="Hamilton J.P."/>
            <person name="Kanamori H."/>
            <person name="McCombie W.R."/>
            <person name="Ouyang S."/>
            <person name="Schwartz D.C."/>
            <person name="Tanaka T."/>
            <person name="Wu J."/>
            <person name="Zhou S."/>
            <person name="Childs K.L."/>
            <person name="Davidson R.M."/>
            <person name="Lin H."/>
            <person name="Quesada-Ocampo L."/>
            <person name="Vaillancourt B."/>
            <person name="Sakai H."/>
            <person name="Lee S.S."/>
            <person name="Kim J."/>
            <person name="Numa H."/>
            <person name="Itoh T."/>
            <person name="Buell C.R."/>
            <person name="Matsumoto T."/>
        </authorList>
    </citation>
    <scope>GENOME REANNOTATION</scope>
    <source>
        <strain>cv. Nipponbare</strain>
    </source>
</reference>
<reference key="6">
    <citation type="journal article" date="2003" name="Science">
        <title>Collection, mapping, and annotation of over 28,000 cDNA clones from japonica rice.</title>
        <authorList>
            <consortium name="The rice full-length cDNA consortium"/>
        </authorList>
    </citation>
    <scope>NUCLEOTIDE SEQUENCE [LARGE SCALE MRNA] OF 165-1457</scope>
    <source>
        <strain>cv. Nipponbare</strain>
    </source>
</reference>
<reference key="7">
    <citation type="journal article" date="2002" name="Planta">
        <title>The plant PDR family of ABC transporters.</title>
        <authorList>
            <person name="van den Brule S."/>
            <person name="Smart C.C."/>
        </authorList>
    </citation>
    <scope>IDENTIFICATION</scope>
</reference>
<reference key="8">
    <citation type="journal article" date="2006" name="FEBS Lett.">
        <title>Organization and function of the plant pleiotropic drug resistance ABC transporter family.</title>
        <authorList>
            <person name="Crouzet J."/>
            <person name="Trombik T."/>
            <person name="Fraysse A.S."/>
            <person name="Boutry M."/>
        </authorList>
    </citation>
    <scope>GENE FAMILY</scope>
    <scope>NOMENCLATURE</scope>
</reference>
<reference key="9">
    <citation type="journal article" date="2008" name="Trends Plant Sci.">
        <title>Plant ABC proteins - a unified nomenclature and updated inventory.</title>
        <authorList>
            <person name="Verrier P.J."/>
            <person name="Bird D."/>
            <person name="Burla B."/>
            <person name="Dassa E."/>
            <person name="Forestier C."/>
            <person name="Geisler M."/>
            <person name="Klein M."/>
            <person name="Kolukisaoglu H.U."/>
            <person name="Lee Y."/>
            <person name="Martinoia E."/>
            <person name="Murphy A."/>
            <person name="Rea P.A."/>
            <person name="Samuels L."/>
            <person name="Schulz B."/>
            <person name="Spalding E.J."/>
            <person name="Yazaki K."/>
            <person name="Theodoulou F.L."/>
        </authorList>
    </citation>
    <scope>GENE FAMILY</scope>
    <scope>NOMENCLATURE</scope>
</reference>
<sequence length="1457" mass="162955">MDAAGEIQKVASMRLGGSMRGDSGSMWRRGDDVFSRSSREEDDEEALRWAALEKLPTYDRVRRAILPLGGDDGAGDGGGKGVVDVHGLGPRERRALLERLVRVADEDNEKFLLKLKDRVDRVGIDMPTIEVRFEHLEAEAEVRVGNSGLPTVLNSITNTLEEAGNALGILPNRKQTMPVLHDVSGIIKPRRMTLLLGPPGSGKTTLLLALAGRLGKDLKASGKVTYNGHGMEEFVPERTAAYISQHDLHIGEMTVRETLAFSARCQGVGSRFDMLTELSRREKAANIKPDADIDAFMKAAAMGGQEANVNTDYILKILGLEICADTMVGDEMLRGISGGQRKRVTTGEMLVGPARALFMDEISTGLDSSTTFQIVNSLRQTVHILGGTAVISLLQPAPETYNLFDDIILLSDGQIVYQGPREDVLEFFESMGFKCPDRKGVADFLQEVTSKKDQRQYWARHDKPYRFVTVKEFVSAFQSFHTGRAIANELAVPFDKSKSHPAALATTRYGAPGKELLKANIDREILLMKRNSFVYMFRTFQLMVVSLIAMTLFFRTKMKRDSVTSGGIYMGALFFGVLMIMFNGFSELALTVFKLPVFFKQRDLLFYPAWSYTIPSWILKIPITFIEVGGYVFLTYYVIGFDSNVGSFFKQYLLMLAINQMAGSLFRFIGGAARNMIVANVFASFMLLIFMVLGGFILAREQVKKWWIWGYWISPMMYAQNAISVNELMGHSWNKIVNSSASNETLGVQVLKSRGVFPEARWYWIGFGAMIGFTILFNALFTLALTYLRPYGNSRQSVSEEELKEKRANLNGEIVGDVHLSSGSTRRPMGNGTENDSTIVDDDTEVTQRGMVLPFTPLSLSFDNVRYSVDMPQEMKAQGVADDRLELLKGVSGSFRPGVLTALMGVSGAGKTTLMDVLAGRKTGGYIEGSINISGYPKKQETFARVSGYCEQNDIHSPQVTVYESLLFSAWLRLPEDVDSNTRKMFIEEVMELVELKSLRDALVGLPGVNGLSTEQRKRLTIAVELVANPSIIFMDEPTSGLDARAAAIVMRTVRNTVNTGRTVVCTIHQPSIDIFEAFDELFLMKRGGEEIYAGPLGHHSSELIKYFESIPGVSKIKDGYNPATWMLEVTTIGQEQALGVDFSDIYKKSELYQRNKALIKDLSQPAPDSSDLYFPTQYSQSSLTQCMACLWKQNLSYWRNPPYNAVRFFFTTVIALLFGTIFWDLGGKVTKSQDLFNAMGSMYAAVLFIGVMNCTSVQPVVAVERTVFYRERAAGMYSAFPYAFGQVVIEIPYTLVQATVYGIIVYAMIGFEWTAAKFFWYLFFMVFTLLYFTFYGMMAVGLTPNYHIASIVSSAFYAIWNLFSGFVIPRPRVPIWWRWYCWACPVAWTLYGLVVSQFGDIETPMEDGTPVKVFVENYFGFKHSWLGWVATVVAAFAFLFASLFGFAIMKFNFQKR</sequence>
<dbReference type="EMBL" id="AJ535046">
    <property type="protein sequence ID" value="CAD59568.1"/>
    <property type="molecule type" value="Genomic_DNA"/>
</dbReference>
<dbReference type="EMBL" id="AP002844">
    <property type="protein sequence ID" value="BAD52520.1"/>
    <property type="status" value="ALT_SEQ"/>
    <property type="molecule type" value="Genomic_DNA"/>
</dbReference>
<dbReference type="EMBL" id="AP002844">
    <property type="protein sequence ID" value="BAD52521.1"/>
    <property type="status" value="ALT_SEQ"/>
    <property type="molecule type" value="Genomic_DNA"/>
</dbReference>
<dbReference type="EMBL" id="AP008207">
    <property type="protein sequence ID" value="BAF05453.1"/>
    <property type="molecule type" value="Genomic_DNA"/>
</dbReference>
<dbReference type="EMBL" id="AP014957">
    <property type="status" value="NOT_ANNOTATED_CDS"/>
    <property type="molecule type" value="Genomic_DNA"/>
</dbReference>
<dbReference type="EMBL" id="AK100135">
    <property type="status" value="NOT_ANNOTATED_CDS"/>
    <property type="molecule type" value="mRNA"/>
</dbReference>
<dbReference type="EMBL" id="BK001017">
    <property type="protein sequence ID" value="DAA00886.1"/>
    <property type="molecule type" value="Genomic_DNA"/>
</dbReference>
<dbReference type="RefSeq" id="XP_015648322.1">
    <property type="nucleotide sequence ID" value="XM_015792836.1"/>
</dbReference>
<dbReference type="SMR" id="Q0JLC5"/>
<dbReference type="FunCoup" id="Q0JLC5">
    <property type="interactions" value="114"/>
</dbReference>
<dbReference type="STRING" id="39947.Q0JLC5"/>
<dbReference type="PaxDb" id="39947-Q0JLC5"/>
<dbReference type="EnsemblPlants" id="Os01t0609300-01">
    <property type="protein sequence ID" value="Os01t0609300-01"/>
    <property type="gene ID" value="Os01g0609300"/>
</dbReference>
<dbReference type="Gramene" id="Os01t0609300-01">
    <property type="protein sequence ID" value="Os01t0609300-01"/>
    <property type="gene ID" value="Os01g0609300"/>
</dbReference>
<dbReference type="KEGG" id="dosa:Os01g0609300"/>
<dbReference type="eggNOG" id="KOG0065">
    <property type="taxonomic scope" value="Eukaryota"/>
</dbReference>
<dbReference type="HOGENOM" id="CLU_000604_35_6_1"/>
<dbReference type="InParanoid" id="Q0JLC5"/>
<dbReference type="OrthoDB" id="66620at2759"/>
<dbReference type="Proteomes" id="UP000000763">
    <property type="component" value="Chromosome 1"/>
</dbReference>
<dbReference type="Proteomes" id="UP000059680">
    <property type="component" value="Chromosome 1"/>
</dbReference>
<dbReference type="GO" id="GO:0016020">
    <property type="term" value="C:membrane"/>
    <property type="evidence" value="ECO:0007669"/>
    <property type="project" value="UniProtKB-SubCell"/>
</dbReference>
<dbReference type="GO" id="GO:0140359">
    <property type="term" value="F:ABC-type transporter activity"/>
    <property type="evidence" value="ECO:0007669"/>
    <property type="project" value="InterPro"/>
</dbReference>
<dbReference type="GO" id="GO:0005524">
    <property type="term" value="F:ATP binding"/>
    <property type="evidence" value="ECO:0007669"/>
    <property type="project" value="UniProtKB-KW"/>
</dbReference>
<dbReference type="GO" id="GO:0016887">
    <property type="term" value="F:ATP hydrolysis activity"/>
    <property type="evidence" value="ECO:0007669"/>
    <property type="project" value="InterPro"/>
</dbReference>
<dbReference type="CDD" id="cd03232">
    <property type="entry name" value="ABCG_PDR_domain2"/>
    <property type="match status" value="1"/>
</dbReference>
<dbReference type="FunFam" id="3.40.50.300:FF:000179">
    <property type="entry name" value="ABC transporter G family member 34"/>
    <property type="match status" value="1"/>
</dbReference>
<dbReference type="FunFam" id="3.40.50.300:FF:000059">
    <property type="entry name" value="ABC transporter G family member 40"/>
    <property type="match status" value="1"/>
</dbReference>
<dbReference type="Gene3D" id="3.40.50.300">
    <property type="entry name" value="P-loop containing nucleotide triphosphate hydrolases"/>
    <property type="match status" value="2"/>
</dbReference>
<dbReference type="InterPro" id="IPR003593">
    <property type="entry name" value="AAA+_ATPase"/>
</dbReference>
<dbReference type="InterPro" id="IPR013525">
    <property type="entry name" value="ABC2_TM"/>
</dbReference>
<dbReference type="InterPro" id="IPR029481">
    <property type="entry name" value="ABC_trans_N"/>
</dbReference>
<dbReference type="InterPro" id="IPR003439">
    <property type="entry name" value="ABC_transporter-like_ATP-bd"/>
</dbReference>
<dbReference type="InterPro" id="IPR043926">
    <property type="entry name" value="ABCG_dom"/>
</dbReference>
<dbReference type="InterPro" id="IPR034003">
    <property type="entry name" value="ABCG_PDR_2"/>
</dbReference>
<dbReference type="InterPro" id="IPR027417">
    <property type="entry name" value="P-loop_NTPase"/>
</dbReference>
<dbReference type="InterPro" id="IPR013581">
    <property type="entry name" value="PDR_assoc"/>
</dbReference>
<dbReference type="PANTHER" id="PTHR48040:SF35">
    <property type="entry name" value="ABC TRANSPORTER G FAMILY MEMBER 39-LIKE"/>
    <property type="match status" value="1"/>
</dbReference>
<dbReference type="PANTHER" id="PTHR48040">
    <property type="entry name" value="PLEIOTROPIC DRUG RESISTANCE PROTEIN 1-LIKE ISOFORM X1"/>
    <property type="match status" value="1"/>
</dbReference>
<dbReference type="Pfam" id="PF01061">
    <property type="entry name" value="ABC2_membrane"/>
    <property type="match status" value="2"/>
</dbReference>
<dbReference type="Pfam" id="PF19055">
    <property type="entry name" value="ABC2_membrane_7"/>
    <property type="match status" value="1"/>
</dbReference>
<dbReference type="Pfam" id="PF00005">
    <property type="entry name" value="ABC_tran"/>
    <property type="match status" value="2"/>
</dbReference>
<dbReference type="Pfam" id="PF14510">
    <property type="entry name" value="ABC_trans_N"/>
    <property type="match status" value="1"/>
</dbReference>
<dbReference type="Pfam" id="PF08370">
    <property type="entry name" value="PDR_assoc"/>
    <property type="match status" value="1"/>
</dbReference>
<dbReference type="SMART" id="SM00382">
    <property type="entry name" value="AAA"/>
    <property type="match status" value="2"/>
</dbReference>
<dbReference type="SUPFAM" id="SSF52540">
    <property type="entry name" value="P-loop containing nucleoside triphosphate hydrolases"/>
    <property type="match status" value="2"/>
</dbReference>
<dbReference type="PROSITE" id="PS50893">
    <property type="entry name" value="ABC_TRANSPORTER_2"/>
    <property type="match status" value="2"/>
</dbReference>
<accession>Q0JLC5</accession>
<accession>Q5ZE26</accession>
<accession>Q5ZE27</accession>
<accession>Q6WSC4</accession>
<accession>Q8GU90</accession>
<organism>
    <name type="scientific">Oryza sativa subsp. japonica</name>
    <name type="common">Rice</name>
    <dbReference type="NCBI Taxonomy" id="39947"/>
    <lineage>
        <taxon>Eukaryota</taxon>
        <taxon>Viridiplantae</taxon>
        <taxon>Streptophyta</taxon>
        <taxon>Embryophyta</taxon>
        <taxon>Tracheophyta</taxon>
        <taxon>Spermatophyta</taxon>
        <taxon>Magnoliopsida</taxon>
        <taxon>Liliopsida</taxon>
        <taxon>Poales</taxon>
        <taxon>Poaceae</taxon>
        <taxon>BOP clade</taxon>
        <taxon>Oryzoideae</taxon>
        <taxon>Oryzeae</taxon>
        <taxon>Oryzinae</taxon>
        <taxon>Oryza</taxon>
        <taxon>Oryza sativa</taxon>
    </lineage>
</organism>
<evidence type="ECO:0000250" key="1"/>
<evidence type="ECO:0000255" key="2"/>
<evidence type="ECO:0000255" key="3">
    <source>
        <dbReference type="PROSITE-ProRule" id="PRU00434"/>
    </source>
</evidence>
<evidence type="ECO:0000256" key="4">
    <source>
        <dbReference type="SAM" id="MobiDB-lite"/>
    </source>
</evidence>
<evidence type="ECO:0000303" key="5">
    <source>
    </source>
</evidence>
<evidence type="ECO:0000303" key="6">
    <source>
    </source>
</evidence>
<evidence type="ECO:0000303" key="7">
    <source>
    </source>
</evidence>
<evidence type="ECO:0000303" key="8">
    <source>
    </source>
</evidence>
<evidence type="ECO:0000305" key="9"/>
<evidence type="ECO:0000312" key="10">
    <source>
        <dbReference type="EMBL" id="BAD52520.1"/>
    </source>
</evidence>
<evidence type="ECO:0000312" key="11">
    <source>
        <dbReference type="EMBL" id="BAD52521.1"/>
    </source>
</evidence>
<evidence type="ECO:0000312" key="12">
    <source>
        <dbReference type="EMBL" id="BAF05453.1"/>
    </source>
</evidence>
<name>AB36G_ORYSJ</name>
<comment type="function">
    <text evidence="1">May be a general defense protein.</text>
</comment>
<comment type="subcellular location">
    <subcellularLocation>
        <location evidence="2">Membrane</location>
        <topology evidence="2">Multi-pass membrane protein</topology>
    </subcellularLocation>
</comment>
<comment type="similarity">
    <text evidence="9">Belongs to the ABC transporter superfamily. ABCG family. PDR (TC 3.A.1.205) subfamily.</text>
</comment>
<comment type="sequence caution" evidence="9">
    <conflict type="frameshift">
        <sequence resource="EMBL" id="AK100135"/>
    </conflict>
</comment>
<comment type="sequence caution" evidence="9">
    <conflict type="erroneous gene model prediction">
        <sequence resource="EMBL-CDS" id="BAD52520"/>
    </conflict>
</comment>
<comment type="sequence caution" evidence="9">
    <conflict type="erroneous gene model prediction">
        <sequence resource="EMBL-CDS" id="BAD52521"/>
    </conflict>
</comment>
<proteinExistence type="evidence at transcript level"/>
<feature type="chain" id="PRO_0000234645" description="ABC transporter G family member 36">
    <location>
        <begin position="1"/>
        <end position="1457"/>
    </location>
</feature>
<feature type="transmembrane region" description="Helical" evidence="2">
    <location>
        <begin position="533"/>
        <end position="553"/>
    </location>
</feature>
<feature type="transmembrane region" description="Helical" evidence="2">
    <location>
        <begin position="565"/>
        <end position="585"/>
    </location>
</feature>
<feature type="transmembrane region" description="Helical" evidence="2">
    <location>
        <begin position="621"/>
        <end position="641"/>
    </location>
</feature>
<feature type="transmembrane region" description="Helical" evidence="2">
    <location>
        <begin position="653"/>
        <end position="673"/>
    </location>
</feature>
<feature type="transmembrane region" description="Helical" evidence="2">
    <location>
        <begin position="677"/>
        <end position="697"/>
    </location>
</feature>
<feature type="transmembrane region" description="Helical" evidence="2">
    <location>
        <begin position="706"/>
        <end position="726"/>
    </location>
</feature>
<feature type="transmembrane region" description="Helical" evidence="2">
    <location>
        <begin position="765"/>
        <end position="785"/>
    </location>
</feature>
<feature type="transmembrane region" description="Helical" evidence="2">
    <location>
        <begin position="1209"/>
        <end position="1229"/>
    </location>
</feature>
<feature type="transmembrane region" description="Helical" evidence="2">
    <location>
        <begin position="1244"/>
        <end position="1264"/>
    </location>
</feature>
<feature type="transmembrane region" description="Helical" evidence="2">
    <location>
        <begin position="1292"/>
        <end position="1312"/>
    </location>
</feature>
<feature type="transmembrane region" description="Helical" evidence="2">
    <location>
        <begin position="1319"/>
        <end position="1339"/>
    </location>
</feature>
<feature type="transmembrane region" description="Helical" evidence="2">
    <location>
        <begin position="1349"/>
        <end position="1369"/>
    </location>
</feature>
<feature type="transmembrane region" description="Helical" evidence="2">
    <location>
        <begin position="1380"/>
        <end position="1400"/>
    </location>
</feature>
<feature type="transmembrane region" description="Helical" evidence="2">
    <location>
        <begin position="1429"/>
        <end position="1449"/>
    </location>
</feature>
<feature type="domain" description="ABC transporter 1" evidence="3">
    <location>
        <begin position="164"/>
        <end position="437"/>
    </location>
</feature>
<feature type="domain" description="ABC transmembrane type-2 1">
    <location>
        <begin position="515"/>
        <end position="728"/>
    </location>
</feature>
<feature type="domain" description="ABC transporter 2" evidence="3">
    <location>
        <begin position="860"/>
        <end position="1112"/>
    </location>
</feature>
<feature type="domain" description="ABC transmembrane type-2 2">
    <location>
        <begin position="1185"/>
        <end position="1399"/>
    </location>
</feature>
<feature type="region of interest" description="Disordered" evidence="4">
    <location>
        <begin position="14"/>
        <end position="43"/>
    </location>
</feature>
<feature type="region of interest" description="Disordered" evidence="4">
    <location>
        <begin position="821"/>
        <end position="841"/>
    </location>
</feature>
<feature type="compositionally biased region" description="Basic and acidic residues" evidence="4">
    <location>
        <begin position="28"/>
        <end position="39"/>
    </location>
</feature>
<feature type="binding site" evidence="3">
    <location>
        <begin position="197"/>
        <end position="204"/>
    </location>
    <ligand>
        <name>ATP</name>
        <dbReference type="ChEBI" id="CHEBI:30616"/>
        <label>1</label>
    </ligand>
</feature>
<feature type="binding site" evidence="3">
    <location>
        <begin position="905"/>
        <end position="912"/>
    </location>
    <ligand>
        <name>ATP</name>
        <dbReference type="ChEBI" id="CHEBI:30616"/>
        <label>2</label>
    </ligand>
</feature>
<protein>
    <recommendedName>
        <fullName evidence="8">ABC transporter G family member 36</fullName>
        <shortName evidence="8">OsABCG36</shortName>
    </recommendedName>
    <alternativeName>
        <fullName evidence="6 7">Pleiotropic drug resistance protein 9</fullName>
        <shortName evidence="7">OsPDR9</shortName>
    </alternativeName>
</protein>
<keyword id="KW-0067">ATP-binding</keyword>
<keyword id="KW-0472">Membrane</keyword>
<keyword id="KW-0547">Nucleotide-binding</keyword>
<keyword id="KW-1185">Reference proteome</keyword>
<keyword id="KW-0677">Repeat</keyword>
<keyword id="KW-0812">Transmembrane</keyword>
<keyword id="KW-1133">Transmembrane helix</keyword>
<keyword id="KW-0813">Transport</keyword>